<gene>
    <name evidence="6" type="primary">PiNMT</name>
    <name evidence="6" type="synonym">Rs8692</name>
</gene>
<sequence length="290" mass="31987">MAEKQQAVAEFYDNSTGAWEVFFGDHLHDGFYDPGTTATIAGSRAAVVRMIDEALRFANISDDPAKKPKTMLDVGCGIGGTCLHVAKKYGIQCKGITISSEQVKCAQGFAEEQGLEKKVSFDVGDALDMPYKDGTFDLVFTIQCIEHIQDKEKFIREMVRVAAPGAPIVIVSYAHRNLSPSEGSLKPEEKKVLKKICDNIVLSWVCSSADYVRWLTPLPVEDIKAADWTQNITPFYPLLMKEAFTWKGFTSLLMKGGWSAIKVVLAVRMMAKAADDGVLKFVAVTCRKSK</sequence>
<comment type="function">
    <text evidence="4">S-adenosyl-L-methionine-dependent N-methyltransferase involved in the biosynthesis of biologically active monoterpenoid indole alkaloids (MIAs) natural products including vindoline (PubMed:26848097). Catalyzes the conversion of picrinine to N-methylpicrinine (ervincine) (PubMed:26848097). Also accepts, with low efficiency, 21-hydroxycyclolochnericine and norajmaline as substrates (PubMed:26848097).</text>
</comment>
<comment type="catalytic activity">
    <reaction evidence="4">
        <text>picrinine + S-adenosyl-L-methionine = ervincine + S-adenosyl-L-homocysteine + H(+)</text>
        <dbReference type="Rhea" id="RHEA:76143"/>
        <dbReference type="ChEBI" id="CHEBI:15378"/>
        <dbReference type="ChEBI" id="CHEBI:57856"/>
        <dbReference type="ChEBI" id="CHEBI:59789"/>
        <dbReference type="ChEBI" id="CHEBI:70505"/>
        <dbReference type="ChEBI" id="CHEBI:194555"/>
    </reaction>
    <physiologicalReaction direction="left-to-right" evidence="4">
        <dbReference type="Rhea" id="RHEA:76144"/>
    </physiologicalReaction>
</comment>
<comment type="biophysicochemical properties">
    <kinetics>
        <KM evidence="4">20 uM for picrinine</KM>
        <KM evidence="4">9.3 uM for S-adenosyl-L-methionine</KM>
        <Vmax evidence="4">126.1 pmol/sec/mg enzyme with picrinine as substrate</Vmax>
        <Vmax evidence="4">97.2 pmol/sec/mg enzyme with S-adenosyl-L-methionine as substrate</Vmax>
        <text evidence="4">kcat is 5.8 sec(-1) with picrinine as substrate (PubMed:26848097). kcat is 4.5 sec(-1) with S-adenosyl-L-methionine as substrate (PubMed:26848097).</text>
    </kinetics>
    <phDependence>
        <text evidence="4">Optimum pH is 7.5.</text>
    </phDependence>
    <temperatureDependence>
        <text evidence="4">Optimum temperature is 22 degrees Celsius.</text>
    </temperatureDependence>
</comment>
<comment type="pathway">
    <text evidence="4">Alkaloid biosynthesis; vindoline biosynthesis.</text>
</comment>
<comment type="subunit">
    <text evidence="1">Homodimer.</text>
</comment>
<comment type="subcellular location">
    <subcellularLocation>
        <location evidence="5">Vacuole membrane</location>
    </subcellularLocation>
</comment>
<comment type="tissue specificity">
    <text evidence="4">Accumulates in tissues actively synthesizing monoterpenoid indole alkaloids (MIAs) (at protein level) (PubMed:26848097). Mainly expressed in young leaves and, to a lower extent, in roots and stems (PubMed:26848097).</text>
</comment>
<comment type="similarity">
    <text evidence="3">Belongs to the class I-like SAM-binding methyltransferase superfamily. gTMT family.</text>
</comment>
<reference key="1">
    <citation type="journal article" date="2016" name="Plant Physiol.">
        <title>A picrinine N-methyltransferase belongs to a new family of gamma-tocopherol-like methyltransferases found in medicinal plants that make biologically active monoterpenoid indole alkaloids.</title>
        <authorList>
            <person name="Levac D."/>
            <person name="Cazares P."/>
            <person name="Yu F."/>
            <person name="De Luca V."/>
        </authorList>
    </citation>
    <scope>NUCLEOTIDE SEQUENCE [MRNA]</scope>
    <scope>FUNCTION</scope>
    <scope>CATALYTIC ACTIVITY</scope>
    <scope>PATHWAY</scope>
    <scope>TISSUE SPECIFICITY</scope>
    <scope>BIOPHYSICOCHEMICAL PROPERTIES</scope>
    <source>
        <tissue>Root</tissue>
    </source>
</reference>
<reference key="2">
    <citation type="journal article" date="2022" name="Plant Cell Physiol.">
        <title>Tonoplast and peroxisome targeting of gamma-tocopherol N-methyltransferase homologs involved in the synthesis of monoterpene indole alkaloids.</title>
        <authorList>
            <person name="Koudounas K."/>
            <person name="Guirimand G."/>
            <person name="Hoyos L.F.R."/>
            <person name="Carqueijeiro I."/>
            <person name="Cruz P.L."/>
            <person name="Stander E."/>
            <person name="Kulagina N."/>
            <person name="Perrin J."/>
            <person name="Oudin A."/>
            <person name="Besseau S."/>
            <person name="Lanoue A."/>
            <person name="Atehortua L."/>
            <person name="St-Pierre B."/>
            <person name="Giglioli-Guivarc'h N."/>
            <person name="Papon N."/>
            <person name="O'Connor S.E."/>
            <person name="Courdavault V."/>
        </authorList>
    </citation>
    <scope>SUBCELLULAR LOCATION</scope>
    <scope>GENE FAMILY</scope>
</reference>
<protein>
    <recommendedName>
        <fullName evidence="6">Picrinine-N-methytransferase</fullName>
        <shortName evidence="6">RsPiNMT</shortName>
        <ecNumber evidence="4">2.1.1.-</ecNumber>
    </recommendedName>
    <alternativeName>
        <fullName evidence="6">Gamma-tocopherol-like methyltransferase PiNMT</fullName>
        <shortName evidence="6">RsTLMT</shortName>
    </alternativeName>
</protein>
<feature type="chain" id="PRO_0000458246" description="Picrinine-N-methytransferase">
    <location>
        <begin position="1"/>
        <end position="290"/>
    </location>
</feature>
<feature type="region of interest" description="SAM motif I" evidence="3">
    <location>
        <begin position="71"/>
        <end position="80"/>
    </location>
</feature>
<feature type="region of interest" description="SAM motif II" evidence="3">
    <location>
        <begin position="134"/>
        <end position="142"/>
    </location>
</feature>
<feature type="region of interest" description="SAM motif III" evidence="3">
    <location>
        <begin position="161"/>
        <end position="170"/>
    </location>
</feature>
<feature type="short sequence motif" description="Vacuolar targeting signal" evidence="2">
    <location>
        <begin position="133"/>
        <end position="139"/>
    </location>
</feature>
<dbReference type="EC" id="2.1.1.-" evidence="4"/>
<dbReference type="EMBL" id="KC708448">
    <property type="protein sequence ID" value="AHH02780.1"/>
    <property type="molecule type" value="mRNA"/>
</dbReference>
<dbReference type="SMR" id="A0A075D5I4"/>
<dbReference type="UniPathway" id="UPA00365"/>
<dbReference type="GO" id="GO:0009705">
    <property type="term" value="C:plant-type vacuole membrane"/>
    <property type="evidence" value="ECO:0000314"/>
    <property type="project" value="UniProtKB"/>
</dbReference>
<dbReference type="GO" id="GO:0008170">
    <property type="term" value="F:N-methyltransferase activity"/>
    <property type="evidence" value="ECO:0000314"/>
    <property type="project" value="UniProtKB"/>
</dbReference>
<dbReference type="GO" id="GO:0008757">
    <property type="term" value="F:S-adenosylmethionine-dependent methyltransferase activity"/>
    <property type="evidence" value="ECO:0007669"/>
    <property type="project" value="InterPro"/>
</dbReference>
<dbReference type="GO" id="GO:0009821">
    <property type="term" value="P:alkaloid biosynthetic process"/>
    <property type="evidence" value="ECO:0000314"/>
    <property type="project" value="UniProtKB"/>
</dbReference>
<dbReference type="GO" id="GO:0032259">
    <property type="term" value="P:methylation"/>
    <property type="evidence" value="ECO:0007669"/>
    <property type="project" value="UniProtKB-KW"/>
</dbReference>
<dbReference type="GO" id="GO:1900985">
    <property type="term" value="P:vindoline biosynthetic process"/>
    <property type="evidence" value="ECO:0000314"/>
    <property type="project" value="UniProtKB"/>
</dbReference>
<dbReference type="CDD" id="cd02440">
    <property type="entry name" value="AdoMet_MTases"/>
    <property type="match status" value="1"/>
</dbReference>
<dbReference type="Gene3D" id="3.40.50.150">
    <property type="entry name" value="Vaccinia Virus protein VP39"/>
    <property type="match status" value="1"/>
</dbReference>
<dbReference type="InterPro" id="IPR050447">
    <property type="entry name" value="Erg6_SMT_methyltransf"/>
</dbReference>
<dbReference type="InterPro" id="IPR013216">
    <property type="entry name" value="Methyltransf_11"/>
</dbReference>
<dbReference type="InterPro" id="IPR025774">
    <property type="entry name" value="MTs_g-TMT"/>
</dbReference>
<dbReference type="InterPro" id="IPR029063">
    <property type="entry name" value="SAM-dependent_MTases_sf"/>
</dbReference>
<dbReference type="PANTHER" id="PTHR44068:SF11">
    <property type="entry name" value="GERANYL DIPHOSPHATE 2-C-METHYLTRANSFERASE"/>
    <property type="match status" value="1"/>
</dbReference>
<dbReference type="PANTHER" id="PTHR44068">
    <property type="entry name" value="ZGC:194242"/>
    <property type="match status" value="1"/>
</dbReference>
<dbReference type="Pfam" id="PF08241">
    <property type="entry name" value="Methyltransf_11"/>
    <property type="match status" value="1"/>
</dbReference>
<dbReference type="SUPFAM" id="SSF53335">
    <property type="entry name" value="S-adenosyl-L-methionine-dependent methyltransferases"/>
    <property type="match status" value="1"/>
</dbReference>
<dbReference type="PROSITE" id="PS51581">
    <property type="entry name" value="SAM_GTMT"/>
    <property type="match status" value="1"/>
</dbReference>
<organism>
    <name type="scientific">Rauvolfia serpentina</name>
    <name type="common">Serpentine wood</name>
    <name type="synonym">Ophioxylon serpentinum</name>
    <dbReference type="NCBI Taxonomy" id="4060"/>
    <lineage>
        <taxon>Eukaryota</taxon>
        <taxon>Viridiplantae</taxon>
        <taxon>Streptophyta</taxon>
        <taxon>Embryophyta</taxon>
        <taxon>Tracheophyta</taxon>
        <taxon>Spermatophyta</taxon>
        <taxon>Magnoliopsida</taxon>
        <taxon>eudicotyledons</taxon>
        <taxon>Gunneridae</taxon>
        <taxon>Pentapetalae</taxon>
        <taxon>asterids</taxon>
        <taxon>lamiids</taxon>
        <taxon>Gentianales</taxon>
        <taxon>Apocynaceae</taxon>
        <taxon>Rauvolfioideae</taxon>
        <taxon>Vinceae</taxon>
        <taxon>Rauvolfiinae</taxon>
        <taxon>Rauvolfia</taxon>
    </lineage>
</organism>
<evidence type="ECO:0000250" key="1">
    <source>
        <dbReference type="UniProtKB" id="W5U2K2"/>
    </source>
</evidence>
<evidence type="ECO:0000255" key="2"/>
<evidence type="ECO:0000255" key="3">
    <source>
        <dbReference type="PROSITE-ProRule" id="PRU00914"/>
    </source>
</evidence>
<evidence type="ECO:0000269" key="4">
    <source>
    </source>
</evidence>
<evidence type="ECO:0000269" key="5">
    <source>
    </source>
</evidence>
<evidence type="ECO:0000303" key="6">
    <source>
    </source>
</evidence>
<name>PINMT_RAUSE</name>
<proteinExistence type="evidence at protein level"/>
<keyword id="KW-0017">Alkaloid metabolism</keyword>
<keyword id="KW-0472">Membrane</keyword>
<keyword id="KW-0489">Methyltransferase</keyword>
<keyword id="KW-0949">S-adenosyl-L-methionine</keyword>
<keyword id="KW-0808">Transferase</keyword>
<keyword id="KW-0926">Vacuole</keyword>
<accession>A0A075D5I4</accession>